<organism>
    <name type="scientific">Oryza sativa subsp. japonica</name>
    <name type="common">Rice</name>
    <dbReference type="NCBI Taxonomy" id="39947"/>
    <lineage>
        <taxon>Eukaryota</taxon>
        <taxon>Viridiplantae</taxon>
        <taxon>Streptophyta</taxon>
        <taxon>Embryophyta</taxon>
        <taxon>Tracheophyta</taxon>
        <taxon>Spermatophyta</taxon>
        <taxon>Magnoliopsida</taxon>
        <taxon>Liliopsida</taxon>
        <taxon>Poales</taxon>
        <taxon>Poaceae</taxon>
        <taxon>BOP clade</taxon>
        <taxon>Oryzoideae</taxon>
        <taxon>Oryzeae</taxon>
        <taxon>Oryzinae</taxon>
        <taxon>Oryza</taxon>
        <taxon>Oryza sativa</taxon>
    </lineage>
</organism>
<feature type="chain" id="PRO_0000440967" description="Cation-transporting ATPase HMA5">
    <location>
        <begin position="1"/>
        <end position="1003"/>
    </location>
</feature>
<feature type="transmembrane region" description="Helical" evidence="1">
    <location>
        <begin position="302"/>
        <end position="322"/>
    </location>
</feature>
<feature type="transmembrane region" description="Helical" evidence="1">
    <location>
        <begin position="331"/>
        <end position="351"/>
    </location>
</feature>
<feature type="transmembrane region" description="Helical" evidence="1">
    <location>
        <begin position="372"/>
        <end position="392"/>
    </location>
</feature>
<feature type="transmembrane region" description="Helical" evidence="1">
    <location>
        <begin position="396"/>
        <end position="416"/>
    </location>
</feature>
<feature type="transmembrane region" description="Helical" evidence="1">
    <location>
        <begin position="562"/>
        <end position="582"/>
    </location>
</feature>
<feature type="transmembrane region" description="Helical" evidence="1">
    <location>
        <begin position="599"/>
        <end position="619"/>
    </location>
</feature>
<feature type="transmembrane region" description="Helical" evidence="1">
    <location>
        <begin position="938"/>
        <end position="958"/>
    </location>
</feature>
<feature type="transmembrane region" description="Helical" evidence="1">
    <location>
        <begin position="966"/>
        <end position="986"/>
    </location>
</feature>
<feature type="domain" description="HMA 1" evidence="2">
    <location>
        <begin position="51"/>
        <end position="117"/>
    </location>
</feature>
<feature type="domain" description="HMA 2" evidence="2">
    <location>
        <begin position="133"/>
        <end position="199"/>
    </location>
</feature>
<feature type="domain" description="HMA 3" evidence="2">
    <location>
        <begin position="207"/>
        <end position="273"/>
    </location>
</feature>
<feature type="region of interest" description="Disordered" evidence="3">
    <location>
        <begin position="6"/>
        <end position="25"/>
    </location>
</feature>
<feature type="compositionally biased region" description="Gly residues" evidence="3">
    <location>
        <begin position="10"/>
        <end position="22"/>
    </location>
</feature>
<feature type="binding site" evidence="2">
    <location>
        <position position="62"/>
    </location>
    <ligand>
        <name>Cu cation</name>
        <dbReference type="ChEBI" id="CHEBI:23378"/>
        <label>1</label>
    </ligand>
</feature>
<feature type="binding site" evidence="2">
    <location>
        <position position="65"/>
    </location>
    <ligand>
        <name>Cu cation</name>
        <dbReference type="ChEBI" id="CHEBI:23378"/>
        <label>1</label>
    </ligand>
</feature>
<feature type="binding site" evidence="2">
    <location>
        <position position="144"/>
    </location>
    <ligand>
        <name>Cu cation</name>
        <dbReference type="ChEBI" id="CHEBI:23378"/>
        <label>2</label>
    </ligand>
</feature>
<feature type="binding site" evidence="2">
    <location>
        <position position="147"/>
    </location>
    <ligand>
        <name>Cu cation</name>
        <dbReference type="ChEBI" id="CHEBI:23378"/>
        <label>2</label>
    </ligand>
</feature>
<evidence type="ECO:0000255" key="1"/>
<evidence type="ECO:0000255" key="2">
    <source>
        <dbReference type="PROSITE-ProRule" id="PRU00280"/>
    </source>
</evidence>
<evidence type="ECO:0000256" key="3">
    <source>
        <dbReference type="SAM" id="MobiDB-lite"/>
    </source>
</evidence>
<evidence type="ECO:0000269" key="4">
    <source>
    </source>
</evidence>
<evidence type="ECO:0000303" key="5">
    <source>
    </source>
</evidence>
<evidence type="ECO:0000305" key="6"/>
<evidence type="ECO:0000312" key="7">
    <source>
        <dbReference type="EMBL" id="BAD45393.1"/>
    </source>
</evidence>
<evidence type="ECO:0000312" key="8">
    <source>
        <dbReference type="EMBL" id="BAS99032.1"/>
    </source>
</evidence>
<gene>
    <name evidence="5" type="primary">HMA9</name>
    <name evidence="8" type="ordered locus">Os06g0665800</name>
    <name evidence="6" type="ordered locus">LOC_Os06g45500</name>
    <name evidence="7" type="ORF">P0473H04.28</name>
</gene>
<name>HMA9_ORYSJ</name>
<keyword id="KW-0104">Cadmium</keyword>
<keyword id="KW-1003">Cell membrane</keyword>
<keyword id="KW-0186">Copper</keyword>
<keyword id="KW-0216">Detoxification</keyword>
<keyword id="KW-0406">Ion transport</keyword>
<keyword id="KW-1027">Lead</keyword>
<keyword id="KW-0472">Membrane</keyword>
<keyword id="KW-0479">Metal-binding</keyword>
<keyword id="KW-1185">Reference proteome</keyword>
<keyword id="KW-0677">Repeat</keyword>
<keyword id="KW-1278">Translocase</keyword>
<keyword id="KW-0812">Transmembrane</keyword>
<keyword id="KW-1133">Transmembrane helix</keyword>
<keyword id="KW-0813">Transport</keyword>
<keyword id="KW-0862">Zinc</keyword>
<proteinExistence type="evidence at transcript level"/>
<accession>A0A0P0X004</accession>
<accession>Q0DAA4</accession>
<accession>Q655X4</accession>
<dbReference type="EC" id="7.2.2.-" evidence="6"/>
<dbReference type="EMBL" id="AP003628">
    <property type="protein sequence ID" value="BAD45393.1"/>
    <property type="status" value="ALT_SEQ"/>
    <property type="molecule type" value="Genomic_DNA"/>
</dbReference>
<dbReference type="EMBL" id="AP008212">
    <property type="protein sequence ID" value="BAF20219.2"/>
    <property type="status" value="ALT_SEQ"/>
    <property type="molecule type" value="Genomic_DNA"/>
</dbReference>
<dbReference type="EMBL" id="AP014962">
    <property type="protein sequence ID" value="BAS99032.1"/>
    <property type="molecule type" value="Genomic_DNA"/>
</dbReference>
<dbReference type="EMBL" id="AK241795">
    <property type="status" value="NOT_ANNOTATED_CDS"/>
    <property type="molecule type" value="mRNA"/>
</dbReference>
<dbReference type="RefSeq" id="XP_015643579.1">
    <property type="nucleotide sequence ID" value="XM_015788093.1"/>
</dbReference>
<dbReference type="SMR" id="A0A0P0X004"/>
<dbReference type="FunCoup" id="A0A0P0X004">
    <property type="interactions" value="2182"/>
</dbReference>
<dbReference type="STRING" id="39947.A0A0P0X004"/>
<dbReference type="PaxDb" id="39947-A0A0P0X004"/>
<dbReference type="EnsemblPlants" id="Os06t0665800-01">
    <property type="protein sequence ID" value="Os06t0665800-01"/>
    <property type="gene ID" value="Os06g0665800"/>
</dbReference>
<dbReference type="Gramene" id="Os06t0665800-01">
    <property type="protein sequence ID" value="Os06t0665800-01"/>
    <property type="gene ID" value="Os06g0665800"/>
</dbReference>
<dbReference type="KEGG" id="dosa:Os06g0665800"/>
<dbReference type="eggNOG" id="KOG0207">
    <property type="taxonomic scope" value="Eukaryota"/>
</dbReference>
<dbReference type="InParanoid" id="A0A0P0X004"/>
<dbReference type="OMA" id="PNSWISG"/>
<dbReference type="OrthoDB" id="432719at2759"/>
<dbReference type="PlantReactome" id="R-OSA-5225756">
    <property type="pathway name" value="Ethylene mediated signaling"/>
</dbReference>
<dbReference type="Proteomes" id="UP000000763">
    <property type="component" value="Chromosome 6"/>
</dbReference>
<dbReference type="Proteomes" id="UP000059680">
    <property type="component" value="Chromosome 6"/>
</dbReference>
<dbReference type="GO" id="GO:0016020">
    <property type="term" value="C:membrane"/>
    <property type="evidence" value="ECO:0000318"/>
    <property type="project" value="GO_Central"/>
</dbReference>
<dbReference type="GO" id="GO:0005886">
    <property type="term" value="C:plasma membrane"/>
    <property type="evidence" value="ECO:0007669"/>
    <property type="project" value="UniProtKB-SubCell"/>
</dbReference>
<dbReference type="GO" id="GO:0005524">
    <property type="term" value="F:ATP binding"/>
    <property type="evidence" value="ECO:0007669"/>
    <property type="project" value="InterPro"/>
</dbReference>
<dbReference type="GO" id="GO:0016887">
    <property type="term" value="F:ATP hydrolysis activity"/>
    <property type="evidence" value="ECO:0007669"/>
    <property type="project" value="InterPro"/>
</dbReference>
<dbReference type="GO" id="GO:0005507">
    <property type="term" value="F:copper ion binding"/>
    <property type="evidence" value="ECO:0000318"/>
    <property type="project" value="GO_Central"/>
</dbReference>
<dbReference type="GO" id="GO:0043682">
    <property type="term" value="F:P-type divalent copper transporter activity"/>
    <property type="evidence" value="ECO:0000318"/>
    <property type="project" value="GO_Central"/>
</dbReference>
<dbReference type="GO" id="GO:0055070">
    <property type="term" value="P:copper ion homeostasis"/>
    <property type="evidence" value="ECO:0000318"/>
    <property type="project" value="GO_Central"/>
</dbReference>
<dbReference type="GO" id="GO:0009636">
    <property type="term" value="P:response to toxic substance"/>
    <property type="evidence" value="ECO:0007669"/>
    <property type="project" value="UniProtKB-KW"/>
</dbReference>
<dbReference type="CDD" id="cd00371">
    <property type="entry name" value="HMA"/>
    <property type="match status" value="2"/>
</dbReference>
<dbReference type="CDD" id="cd02094">
    <property type="entry name" value="P-type_ATPase_Cu-like"/>
    <property type="match status" value="1"/>
</dbReference>
<dbReference type="FunFam" id="3.40.1110.10:FF:000038">
    <property type="entry name" value="Copper-exporting P-type ATPase"/>
    <property type="match status" value="1"/>
</dbReference>
<dbReference type="FunFam" id="3.30.70.100:FF:000005">
    <property type="entry name" value="Copper-exporting P-type ATPase A"/>
    <property type="match status" value="2"/>
</dbReference>
<dbReference type="FunFam" id="2.70.150.10:FF:000002">
    <property type="entry name" value="Copper-transporting ATPase 1, putative"/>
    <property type="match status" value="1"/>
</dbReference>
<dbReference type="FunFam" id="3.40.1110.10:FF:000065">
    <property type="entry name" value="Copper-transporting ATPase RAN1"/>
    <property type="match status" value="1"/>
</dbReference>
<dbReference type="FunFam" id="3.40.50.1000:FF:000031">
    <property type="entry name" value="Probable copper-transporting ATPase HMA5"/>
    <property type="match status" value="1"/>
</dbReference>
<dbReference type="Gene3D" id="3.30.70.100">
    <property type="match status" value="3"/>
</dbReference>
<dbReference type="Gene3D" id="3.40.1110.10">
    <property type="entry name" value="Calcium-transporting ATPase, cytoplasmic domain N"/>
    <property type="match status" value="2"/>
</dbReference>
<dbReference type="Gene3D" id="2.70.150.10">
    <property type="entry name" value="Calcium-transporting ATPase, cytoplasmic transduction domain A"/>
    <property type="match status" value="1"/>
</dbReference>
<dbReference type="Gene3D" id="3.40.50.1000">
    <property type="entry name" value="HAD superfamily/HAD-like"/>
    <property type="match status" value="1"/>
</dbReference>
<dbReference type="InterPro" id="IPR023299">
    <property type="entry name" value="ATPase_P-typ_cyto_dom_N"/>
</dbReference>
<dbReference type="InterPro" id="IPR018303">
    <property type="entry name" value="ATPase_P-typ_P_site"/>
</dbReference>
<dbReference type="InterPro" id="IPR023298">
    <property type="entry name" value="ATPase_P-typ_TM_dom_sf"/>
</dbReference>
<dbReference type="InterPro" id="IPR008250">
    <property type="entry name" value="ATPase_P-typ_transduc_dom_A_sf"/>
</dbReference>
<dbReference type="InterPro" id="IPR036412">
    <property type="entry name" value="HAD-like_sf"/>
</dbReference>
<dbReference type="InterPro" id="IPR023214">
    <property type="entry name" value="HAD_sf"/>
</dbReference>
<dbReference type="InterPro" id="IPR017969">
    <property type="entry name" value="Heavy-metal-associated_CS"/>
</dbReference>
<dbReference type="InterPro" id="IPR006122">
    <property type="entry name" value="HMA_Cu_ion-bd"/>
</dbReference>
<dbReference type="InterPro" id="IPR006121">
    <property type="entry name" value="HMA_dom"/>
</dbReference>
<dbReference type="InterPro" id="IPR036163">
    <property type="entry name" value="HMA_dom_sf"/>
</dbReference>
<dbReference type="InterPro" id="IPR027256">
    <property type="entry name" value="P-typ_ATPase_IB"/>
</dbReference>
<dbReference type="InterPro" id="IPR001757">
    <property type="entry name" value="P_typ_ATPase"/>
</dbReference>
<dbReference type="InterPro" id="IPR044492">
    <property type="entry name" value="P_typ_ATPase_HD_dom"/>
</dbReference>
<dbReference type="NCBIfam" id="TIGR01525">
    <property type="entry name" value="ATPase-IB_hvy"/>
    <property type="match status" value="1"/>
</dbReference>
<dbReference type="NCBIfam" id="TIGR01494">
    <property type="entry name" value="ATPase_P-type"/>
    <property type="match status" value="2"/>
</dbReference>
<dbReference type="NCBIfam" id="TIGR00003">
    <property type="entry name" value="copper ion binding protein"/>
    <property type="match status" value="2"/>
</dbReference>
<dbReference type="PANTHER" id="PTHR46594:SF6">
    <property type="entry name" value="COPPER-TRANSPORTING ATPASE RAN1"/>
    <property type="match status" value="1"/>
</dbReference>
<dbReference type="PANTHER" id="PTHR46594">
    <property type="entry name" value="P-TYPE CATION-TRANSPORTING ATPASE"/>
    <property type="match status" value="1"/>
</dbReference>
<dbReference type="Pfam" id="PF00122">
    <property type="entry name" value="E1-E2_ATPase"/>
    <property type="match status" value="1"/>
</dbReference>
<dbReference type="Pfam" id="PF00403">
    <property type="entry name" value="HMA"/>
    <property type="match status" value="2"/>
</dbReference>
<dbReference type="Pfam" id="PF00702">
    <property type="entry name" value="Hydrolase"/>
    <property type="match status" value="1"/>
</dbReference>
<dbReference type="PRINTS" id="PR00119">
    <property type="entry name" value="CATATPASE"/>
</dbReference>
<dbReference type="PRINTS" id="PR00120">
    <property type="entry name" value="HATPASE"/>
</dbReference>
<dbReference type="SFLD" id="SFLDS00003">
    <property type="entry name" value="Haloacid_Dehalogenase"/>
    <property type="match status" value="1"/>
</dbReference>
<dbReference type="SFLD" id="SFLDF00027">
    <property type="entry name" value="p-type_atpase"/>
    <property type="match status" value="1"/>
</dbReference>
<dbReference type="SUPFAM" id="SSF81653">
    <property type="entry name" value="Calcium ATPase, transduction domain A"/>
    <property type="match status" value="1"/>
</dbReference>
<dbReference type="SUPFAM" id="SSF81665">
    <property type="entry name" value="Calcium ATPase, transmembrane domain M"/>
    <property type="match status" value="1"/>
</dbReference>
<dbReference type="SUPFAM" id="SSF56784">
    <property type="entry name" value="HAD-like"/>
    <property type="match status" value="1"/>
</dbReference>
<dbReference type="SUPFAM" id="SSF55008">
    <property type="entry name" value="HMA, heavy metal-associated domain"/>
    <property type="match status" value="2"/>
</dbReference>
<dbReference type="PROSITE" id="PS00154">
    <property type="entry name" value="ATPASE_E1_E2"/>
    <property type="match status" value="1"/>
</dbReference>
<dbReference type="PROSITE" id="PS01047">
    <property type="entry name" value="HMA_1"/>
    <property type="match status" value="2"/>
</dbReference>
<dbReference type="PROSITE" id="PS50846">
    <property type="entry name" value="HMA_2"/>
    <property type="match status" value="3"/>
</dbReference>
<sequence length="1003" mass="107358">MAHLQLSAVAGGGRPAAAGGGGDEMEDVRLLDSYDEEMGGGAAAAAAGEEEEAHVRVTGMTCSACTSAVEGAVSARRGVRRVAVSLLQNRAHVVFDPALLKVEDIIEAIEDAGFDAEIIPDTAISQPKAQKTLSAQFRIGGMTCANCVNSVEGILKRLSGVKGAVVALATSLGEVEYDPSVINKDEIVEAIEDAGFEAAFLQSSEQDKILLGLTGLHTERDVNVLHDILKKMIGLRQFDVNATVSEVEIIFDPEAVGLRSIVDAIETGSNGRLKAHVQNPYARGASNDAHEAAKMLHLLRSSLFLSIPVFFIRMVCPHIPFIRSILMMHCGPFHMGDLLKWILVSIVQFVVGKRFYIAAYRALRHGSTNMDVLVVLGTTASYVYSVCALLYGAFTGFHPPIYFETSAMIITFVLFGKYLEVLAKGKTSDAIKKLVELVPATALLLLKDKEGKYTEEREIDALLVQPGDILKVLPGSKVPADGVVVWGTSHVNESMITGESAPIPKEVSSAVIGGTMNLHGVLHIQANKVGSETVLSQIISLVETAQMSKAPIQKFADYVASIFVPIVITLSMITFLVWFLCGWVGAYPNSWISGTSNCFVFSLMFAIAVVVIACPCALGLATPTAVMVATGVGANHGVLVKGGDALERAQNVNYVIFDKTGTLTQGKAVVTTAKVFSGMDLGDFLTLVASAEASSEHPLAKAIVEYAFHFHFFGKLPTSKDGIEQRKEDRLSQLLLQVEDFSALPGKGVQCLINGKRVLVGNRTLVTENGVNVPPEAENFLVDLELNAKTGILVSYDDDFVGLMGITDPLKREAAVVVEGLKKMGVHPVMLTGDNWRTAKAVAKEVGIEDVRAEVMPAGKADVVRSLQKDGSIVAMVGDGINDSPALAAADVGMAIGGGTDIAIEAADYVLVRNNLEDVITAIDLSRKTFSRIRWNYFFAMAYNVVAIPVAAGALFPFTRLQMPPWLAGACMAFSSVSVVCSSLLLRRYRKPRLTTVLQITVE</sequence>
<comment type="function">
    <text evidence="4">Metal efflux transporter that may play a role in detoxification of heavy metals, such as zinc, copper, lead and cadmium, especially in the shoots.</text>
</comment>
<comment type="subcellular location">
    <subcellularLocation>
        <location evidence="4">Cell membrane</location>
    </subcellularLocation>
</comment>
<comment type="tissue specificity">
    <text evidence="4">Expressed in root vascular cylinder, vascular bundles and mesophyll cells of leaf blades, and anther walls and microspores of stamens.</text>
</comment>
<comment type="induction">
    <text evidence="4">Induced by high concentrations of copper, zinc and cadmium.</text>
</comment>
<comment type="disruption phenotype">
    <text evidence="4">No visible phenotype under normal growth conditions, but mutant plants exhibit increased sensitivity to elevated levels of zinc, copper, lead, and to a lesser extent cadmium.</text>
</comment>
<comment type="similarity">
    <text evidence="6">Belongs to the cation transport ATPase (P-type) (TC 3.A.3) family. Type IB subfamily.</text>
</comment>
<comment type="sequence caution" evidence="6">
    <conflict type="erroneous gene model prediction">
        <sequence resource="EMBL-CDS" id="BAD45393"/>
    </conflict>
</comment>
<comment type="sequence caution" evidence="6">
    <conflict type="erroneous gene model prediction">
        <sequence resource="EMBL-CDS" id="BAF20219"/>
    </conflict>
</comment>
<protein>
    <recommendedName>
        <fullName evidence="6">Cation-transporting ATPase HMA5</fullName>
        <ecNumber evidence="6">7.2.2.-</ecNumber>
    </recommendedName>
    <alternativeName>
        <fullName evidence="6">Protein HEAVY METAL ATPASE 5</fullName>
        <shortName evidence="5">OsHMA5</shortName>
    </alternativeName>
</protein>
<reference key="1">
    <citation type="journal article" date="2005" name="Nature">
        <title>The map-based sequence of the rice genome.</title>
        <authorList>
            <consortium name="International rice genome sequencing project (IRGSP)"/>
        </authorList>
    </citation>
    <scope>NUCLEOTIDE SEQUENCE [LARGE SCALE GENOMIC DNA]</scope>
    <source>
        <strain>cv. Nipponbare</strain>
    </source>
</reference>
<reference key="2">
    <citation type="journal article" date="2008" name="Nucleic Acids Res.">
        <title>The rice annotation project database (RAP-DB): 2008 update.</title>
        <authorList>
            <consortium name="The rice annotation project (RAP)"/>
        </authorList>
    </citation>
    <scope>GENOME REANNOTATION</scope>
    <source>
        <strain>cv. Nipponbare</strain>
    </source>
</reference>
<reference key="3">
    <citation type="journal article" date="2013" name="Rice">
        <title>Improvement of the Oryza sativa Nipponbare reference genome using next generation sequence and optical map data.</title>
        <authorList>
            <person name="Kawahara Y."/>
            <person name="de la Bastide M."/>
            <person name="Hamilton J.P."/>
            <person name="Kanamori H."/>
            <person name="McCombie W.R."/>
            <person name="Ouyang S."/>
            <person name="Schwartz D.C."/>
            <person name="Tanaka T."/>
            <person name="Wu J."/>
            <person name="Zhou S."/>
            <person name="Childs K.L."/>
            <person name="Davidson R.M."/>
            <person name="Lin H."/>
            <person name="Quesada-Ocampo L."/>
            <person name="Vaillancourt B."/>
            <person name="Sakai H."/>
            <person name="Lee S.S."/>
            <person name="Kim J."/>
            <person name="Numa H."/>
            <person name="Itoh T."/>
            <person name="Buell C.R."/>
            <person name="Matsumoto T."/>
        </authorList>
    </citation>
    <scope>GENOME REANNOTATION</scope>
    <source>
        <strain>cv. Nipponbare</strain>
    </source>
</reference>
<reference key="4">
    <citation type="journal article" date="2003" name="Science">
        <title>Collection, mapping, and annotation of over 28,000 cDNA clones from japonica rice.</title>
        <authorList>
            <consortium name="The rice full-length cDNA consortium"/>
        </authorList>
    </citation>
    <scope>NUCLEOTIDE SEQUENCE [LARGE SCALE MRNA]</scope>
    <source>
        <strain>cv. Nipponbare</strain>
    </source>
</reference>
<reference key="5">
    <citation type="journal article" date="2007" name="Plant Physiol.">
        <title>Rice P1B-type heavy-metal ATPase, OsHMA9, is a metal efflux protein.</title>
        <authorList>
            <person name="Lee S."/>
            <person name="Kim Y.Y."/>
            <person name="Lee Y."/>
            <person name="An G."/>
        </authorList>
    </citation>
    <scope>FUNCTION</scope>
    <scope>SUBCELLULAR LOCATION</scope>
    <scope>TISSUE SPECIFICITY</scope>
    <scope>INDUCTION</scope>
    <scope>DISRUPTION PHENOTYPE</scope>
</reference>